<keyword id="KW-0233">DNA recombination</keyword>
<keyword id="KW-0238">DNA-binding</keyword>
<keyword id="KW-0804">Transcription</keyword>
<keyword id="KW-0805">Transcription regulation</keyword>
<keyword id="KW-0810">Translation regulation</keyword>
<feature type="chain" id="PRO_1000205697" description="Integration host factor subunit beta">
    <location>
        <begin position="1"/>
        <end position="94"/>
    </location>
</feature>
<protein>
    <recommendedName>
        <fullName evidence="1">Integration host factor subunit beta</fullName>
        <shortName evidence="1">IHF-beta</shortName>
    </recommendedName>
</protein>
<sequence>MTKSELIERLAGQQSHIPAKVVEDAVKEMLEQMASTLAEGDRIEIRGFGSFSLHYRAPRVGRNPKTGDKVELEGKYVPHFKPGKELRDRANIYG</sequence>
<gene>
    <name evidence="1" type="primary">ihfB</name>
    <name evidence="1" type="synonym">himD</name>
    <name type="ordered locus">PC1_1736</name>
</gene>
<comment type="function">
    <text evidence="1">This protein is one of the two subunits of integration host factor, a specific DNA-binding protein that functions in genetic recombination as well as in transcriptional and translational control.</text>
</comment>
<comment type="subunit">
    <text evidence="1">Heterodimer of an alpha and a beta chain.</text>
</comment>
<comment type="similarity">
    <text evidence="1">Belongs to the bacterial histone-like protein family.</text>
</comment>
<evidence type="ECO:0000255" key="1">
    <source>
        <dbReference type="HAMAP-Rule" id="MF_00381"/>
    </source>
</evidence>
<organism>
    <name type="scientific">Pectobacterium carotovorum subsp. carotovorum (strain PC1)</name>
    <dbReference type="NCBI Taxonomy" id="561230"/>
    <lineage>
        <taxon>Bacteria</taxon>
        <taxon>Pseudomonadati</taxon>
        <taxon>Pseudomonadota</taxon>
        <taxon>Gammaproteobacteria</taxon>
        <taxon>Enterobacterales</taxon>
        <taxon>Pectobacteriaceae</taxon>
        <taxon>Pectobacterium</taxon>
    </lineage>
</organism>
<reference key="1">
    <citation type="submission" date="2009-07" db="EMBL/GenBank/DDBJ databases">
        <title>Complete sequence of Pectobacterium carotovorum subsp. carotovorum PC1.</title>
        <authorList>
            <consortium name="US DOE Joint Genome Institute"/>
            <person name="Lucas S."/>
            <person name="Copeland A."/>
            <person name="Lapidus A."/>
            <person name="Glavina del Rio T."/>
            <person name="Tice H."/>
            <person name="Bruce D."/>
            <person name="Goodwin L."/>
            <person name="Pitluck S."/>
            <person name="Munk A.C."/>
            <person name="Brettin T."/>
            <person name="Detter J.C."/>
            <person name="Han C."/>
            <person name="Tapia R."/>
            <person name="Larimer F."/>
            <person name="Land M."/>
            <person name="Hauser L."/>
            <person name="Kyrpides N."/>
            <person name="Mikhailova N."/>
            <person name="Balakrishnan V."/>
            <person name="Glasner J."/>
            <person name="Perna N.T."/>
        </authorList>
    </citation>
    <scope>NUCLEOTIDE SEQUENCE [LARGE SCALE GENOMIC DNA]</scope>
    <source>
        <strain>PC1</strain>
    </source>
</reference>
<dbReference type="EMBL" id="CP001657">
    <property type="protein sequence ID" value="ACT12777.1"/>
    <property type="molecule type" value="Genomic_DNA"/>
</dbReference>
<dbReference type="RefSeq" id="WP_005967571.1">
    <property type="nucleotide sequence ID" value="NC_012917.1"/>
</dbReference>
<dbReference type="SMR" id="C6DF68"/>
<dbReference type="STRING" id="561230.PC1_1736"/>
<dbReference type="GeneID" id="93389979"/>
<dbReference type="KEGG" id="pct:PC1_1736"/>
<dbReference type="eggNOG" id="COG0776">
    <property type="taxonomic scope" value="Bacteria"/>
</dbReference>
<dbReference type="HOGENOM" id="CLU_105066_2_0_6"/>
<dbReference type="OrthoDB" id="9804203at2"/>
<dbReference type="Proteomes" id="UP000002736">
    <property type="component" value="Chromosome"/>
</dbReference>
<dbReference type="GO" id="GO:0005694">
    <property type="term" value="C:chromosome"/>
    <property type="evidence" value="ECO:0007669"/>
    <property type="project" value="InterPro"/>
</dbReference>
<dbReference type="GO" id="GO:0005829">
    <property type="term" value="C:cytosol"/>
    <property type="evidence" value="ECO:0007669"/>
    <property type="project" value="TreeGrafter"/>
</dbReference>
<dbReference type="GO" id="GO:0003677">
    <property type="term" value="F:DNA binding"/>
    <property type="evidence" value="ECO:0007669"/>
    <property type="project" value="UniProtKB-UniRule"/>
</dbReference>
<dbReference type="GO" id="GO:0030527">
    <property type="term" value="F:structural constituent of chromatin"/>
    <property type="evidence" value="ECO:0007669"/>
    <property type="project" value="InterPro"/>
</dbReference>
<dbReference type="GO" id="GO:0006310">
    <property type="term" value="P:DNA recombination"/>
    <property type="evidence" value="ECO:0007669"/>
    <property type="project" value="UniProtKB-UniRule"/>
</dbReference>
<dbReference type="GO" id="GO:0006355">
    <property type="term" value="P:regulation of DNA-templated transcription"/>
    <property type="evidence" value="ECO:0007669"/>
    <property type="project" value="UniProtKB-UniRule"/>
</dbReference>
<dbReference type="GO" id="GO:0006417">
    <property type="term" value="P:regulation of translation"/>
    <property type="evidence" value="ECO:0007669"/>
    <property type="project" value="UniProtKB-UniRule"/>
</dbReference>
<dbReference type="CDD" id="cd13836">
    <property type="entry name" value="IHF_B"/>
    <property type="match status" value="1"/>
</dbReference>
<dbReference type="FunFam" id="4.10.520.10:FF:000003">
    <property type="entry name" value="Integration host factor subunit beta"/>
    <property type="match status" value="1"/>
</dbReference>
<dbReference type="Gene3D" id="4.10.520.10">
    <property type="entry name" value="IHF-like DNA-binding proteins"/>
    <property type="match status" value="1"/>
</dbReference>
<dbReference type="HAMAP" id="MF_00381">
    <property type="entry name" value="IHF_beta"/>
    <property type="match status" value="1"/>
</dbReference>
<dbReference type="InterPro" id="IPR000119">
    <property type="entry name" value="Hist_DNA-bd"/>
</dbReference>
<dbReference type="InterPro" id="IPR020816">
    <property type="entry name" value="Histone-like_DNA-bd_CS"/>
</dbReference>
<dbReference type="InterPro" id="IPR010992">
    <property type="entry name" value="IHF-like_DNA-bd_dom_sf"/>
</dbReference>
<dbReference type="InterPro" id="IPR005685">
    <property type="entry name" value="IHF_beta"/>
</dbReference>
<dbReference type="NCBIfam" id="TIGR00988">
    <property type="entry name" value="hip"/>
    <property type="match status" value="1"/>
</dbReference>
<dbReference type="NCBIfam" id="NF001222">
    <property type="entry name" value="PRK00199.1"/>
    <property type="match status" value="1"/>
</dbReference>
<dbReference type="PANTHER" id="PTHR33175">
    <property type="entry name" value="DNA-BINDING PROTEIN HU"/>
    <property type="match status" value="1"/>
</dbReference>
<dbReference type="PANTHER" id="PTHR33175:SF5">
    <property type="entry name" value="INTEGRATION HOST FACTOR SUBUNIT BETA"/>
    <property type="match status" value="1"/>
</dbReference>
<dbReference type="Pfam" id="PF00216">
    <property type="entry name" value="Bac_DNA_binding"/>
    <property type="match status" value="1"/>
</dbReference>
<dbReference type="PRINTS" id="PR01727">
    <property type="entry name" value="DNABINDINGHU"/>
</dbReference>
<dbReference type="SMART" id="SM00411">
    <property type="entry name" value="BHL"/>
    <property type="match status" value="1"/>
</dbReference>
<dbReference type="SUPFAM" id="SSF47729">
    <property type="entry name" value="IHF-like DNA-binding proteins"/>
    <property type="match status" value="1"/>
</dbReference>
<dbReference type="PROSITE" id="PS00045">
    <property type="entry name" value="HISTONE_LIKE"/>
    <property type="match status" value="1"/>
</dbReference>
<name>IHFB_PECCP</name>
<proteinExistence type="inferred from homology"/>
<accession>C6DF68</accession>